<organism>
    <name type="scientific">Caenorhabditis elegans</name>
    <dbReference type="NCBI Taxonomy" id="6239"/>
    <lineage>
        <taxon>Eukaryota</taxon>
        <taxon>Metazoa</taxon>
        <taxon>Ecdysozoa</taxon>
        <taxon>Nematoda</taxon>
        <taxon>Chromadorea</taxon>
        <taxon>Rhabditida</taxon>
        <taxon>Rhabditina</taxon>
        <taxon>Rhabditomorpha</taxon>
        <taxon>Rhabditoidea</taxon>
        <taxon>Rhabditidae</taxon>
        <taxon>Peloderinae</taxon>
        <taxon>Caenorhabditis</taxon>
    </lineage>
</organism>
<reference key="1">
    <citation type="journal article" date="1992" name="Cell">
        <title>Molecular analysis of the C. elegans sex-determining gene tra-1: a gene encoding two zinc finger proteins.</title>
        <authorList>
            <person name="Zarkower D."/>
            <person name="Hodgkin J."/>
        </authorList>
    </citation>
    <scope>NUCLEOTIDE SEQUENCE [MRNA] (ISOFORMS A AND B)</scope>
    <scope>FUNCTION</scope>
    <scope>DEVELOPMENTAL STAGE</scope>
    <source>
        <strain>Bristol N2</strain>
    </source>
</reference>
<reference key="2">
    <citation type="journal article" date="1998" name="Science">
        <title>Genome sequence of the nematode C. elegans: a platform for investigating biology.</title>
        <authorList>
            <consortium name="The C. elegans sequencing consortium"/>
        </authorList>
    </citation>
    <scope>NUCLEOTIDE SEQUENCE [LARGE SCALE GENOMIC DNA]</scope>
    <source>
        <strain>Bristol N2</strain>
    </source>
</reference>
<reference key="3">
    <citation type="journal article" date="1993" name="Nucleic Acids Res.">
        <title>Zinc fingers in sex determination: only one of the two C. elegans Tra-1 proteins binds DNA in vitro.</title>
        <authorList>
            <person name="Zarkower D."/>
            <person name="Hodgkin J."/>
        </authorList>
    </citation>
    <scope>FUNCTION</scope>
</reference>
<reference key="4">
    <citation type="journal article" date="2000" name="Genes Dev.">
        <title>Direct protein-protein interaction between the intracellular domain of TRA-2 and the transcription factor TRA-1A modulates feminizing activity in C. elegans.</title>
        <authorList>
            <person name="Lum D.H."/>
            <person name="Kuwabara P.E."/>
            <person name="Zarkower D."/>
            <person name="Spence A.M."/>
        </authorList>
    </citation>
    <scope>FUNCTION</scope>
    <scope>INTERACTION WITH TRA-2</scope>
</reference>
<reference key="5">
    <citation type="journal article" date="2001" name="Dev. Cell">
        <title>RNA-Regulated TRA-1 nuclear export controls sexual fate.</title>
        <authorList>
            <person name="Segal S.P."/>
            <person name="Graves L.E."/>
            <person name="Verheyden J."/>
            <person name="Goodwin E.B."/>
        </authorList>
    </citation>
    <scope>SUBCELLULAR LOCATION</scope>
    <scope>TISSUE SPECIFICITY</scope>
</reference>
<reference key="6">
    <citation type="journal article" date="2001" name="EMBO J.">
        <title>The TRA-1 transcription factor binds TRA-2 to regulate sexual fates in Caenorhabditis elegans.</title>
        <authorList>
            <person name="Wang S."/>
            <person name="Kimble J."/>
        </authorList>
    </citation>
    <scope>FUNCTION</scope>
    <scope>INTERACTION WITH TRA-2</scope>
</reference>
<reference key="7">
    <citation type="journal article" date="2007" name="Genes Dev.">
        <title>The C. elegans protein CEH-30 protects male-specific neurons from apoptosis independently of the Bcl-2 homolog CED-9.</title>
        <authorList>
            <person name="Schwartz H.T."/>
            <person name="Horvitz H.R."/>
        </authorList>
    </citation>
    <scope>FUNCTION</scope>
</reference>
<reference key="8">
    <citation type="journal article" date="2008" name="Development">
        <title>dmd-3, a doublesex-related gene regulated by tra-1, governs sex-specific morphogenesis in C. elegans.</title>
        <authorList>
            <person name="Mason D.A."/>
            <person name="Rabinowitz J.S."/>
            <person name="Portman D.S."/>
        </authorList>
    </citation>
    <scope>FUNCTION</scope>
</reference>
<reference key="9">
    <citation type="journal article" date="2014" name="Nucleic Acids Res.">
        <title>A role for WDR5 in TRA-1/Gli mediated transcriptional control of the sperm/oocyte switch in C. elegans.</title>
        <authorList>
            <person name="Li T."/>
            <person name="Kelly W.G."/>
        </authorList>
    </citation>
    <scope>FUNCTION</scope>
    <scope>SUBCELLULAR LOCATION</scope>
</reference>
<reference key="10">
    <citation type="journal article" date="2017" name="Curr. Biol.">
        <title>Sexually Dimorphic Differentiation of a C. elegans Hub Neuron Is Cell Autonomously Controlled by a Conserved Transcription Factor.</title>
        <authorList>
            <person name="Serrano-Saiz E."/>
            <person name="Oren-Suissa M."/>
            <person name="Bayer E.A."/>
            <person name="Hobert O."/>
        </authorList>
    </citation>
    <scope>FUNCTION</scope>
</reference>
<name>TRA1_CAEEL</name>
<comment type="function">
    <text evidence="1 4 5 7 8 9 10 11 12">Plays a major role in controlling sexual phenotype (PubMed:1339311). Terminal global regulator in a well-characterized cascade of sex-determining genes (PubMed:8367286). Promotes female development (PubMed:11124807). Interacts with tra-2 to promote spermatogenesis (PubMed:11250902). Promotes spermatogenesis through the Tip60 HAT complex and by regulating the expression of genes, such as fog-3, required for male development (By similarity). Association with chromatin and at the fog-3 promoter requires wdr-5.1, and may also require wdr-5.2 (PubMed:24682813). With trr-1, activates the fog-3 gene to determine sperm/oocyte cell fate (By similarity). In hermaphrodites, binds to an intronic regulatory site in the ceh-30 gene, preventing ceh-30 transcription and thereby preventing survival of the CEM (cephalic male) sensory neurons (PubMed:18056428). Represses the expression of the transcription factor dmd-3 in hermaphrodites to govern the timing and extent of male tail tip morphogenesis (PubMed:18550714). Plays a role in controlling the sex-specific differentiation of PHC sensory neurons and represses the development of male-specific morphological features (PubMed:28065609).</text>
</comment>
<comment type="subunit">
    <text evidence="4 5">Interacts with the MX regulatory domain of tra-2.</text>
</comment>
<comment type="interaction">
    <interactant intactId="EBI-367204">
        <id>P34708</id>
    </interactant>
    <interactant intactId="EBI-367223">
        <id>P34709</id>
        <label>tra-2</label>
    </interactant>
    <organismsDiffer>false</organismsDiffer>
    <experiments>5</experiments>
</comment>
<comment type="interaction">
    <interactant intactId="EBI-367214">
        <id>P34708-1</id>
    </interactant>
    <interactant intactId="EBI-1998155">
        <id>P17221</id>
        <label>fem-1</label>
    </interactant>
    <organismsDiffer>false</organismsDiffer>
    <experiments>2</experiments>
</comment>
<comment type="interaction">
    <interactant intactId="EBI-367214">
        <id>P34708-1</id>
    </interactant>
    <interactant intactId="EBI-1998402">
        <id>P49594</id>
        <label>fem-2</label>
    </interactant>
    <organismsDiffer>false</organismsDiffer>
    <experiments>2</experiments>
</comment>
<comment type="interaction">
    <interactant intactId="EBI-367214">
        <id>P34708-1</id>
    </interactant>
    <interactant intactId="EBI-445465">
        <id>P34691</id>
        <label>fem-3</label>
    </interactant>
    <organismsDiffer>false</organismsDiffer>
    <experiments>2</experiments>
</comment>
<comment type="interaction">
    <interactant intactId="EBI-367214">
        <id>P34708-1</id>
    </interactant>
    <interactant intactId="EBI-367223">
        <id>P34709</id>
        <label>tra-2</label>
    </interactant>
    <organismsDiffer>false</organismsDiffer>
    <experiments>5</experiments>
</comment>
<comment type="subcellular location">
    <subcellularLocation>
        <location evidence="6">Cytoplasm</location>
    </subcellularLocation>
    <subcellularLocation>
        <location evidence="6 10">Nucleus</location>
    </subcellularLocation>
    <text evidence="10">Localization with chromatin in the nucleus in part depends on normal function of wdr-5.1.</text>
</comment>
<comment type="alternative products">
    <event type="alternative splicing"/>
    <isoform>
        <id>P34708-1</id>
        <name evidence="15">a</name>
        <name evidence="13">Tra-1L</name>
        <sequence type="displayed"/>
    </isoform>
    <isoform>
        <id>P34708-2</id>
        <name evidence="16">b</name>
        <name evidence="13">Tra-1S</name>
        <sequence type="described" ref="VSP_006821 VSP_006822"/>
    </isoform>
</comment>
<comment type="tissue specificity">
    <text evidence="6">Expressed in intestine and gonads (at protein level).</text>
</comment>
<comment type="developmental stage">
    <text evidence="7">Isoform b is expressed abundantly in second larval (L2) stage. Isoform a is more abundant in embryos.</text>
</comment>
<comment type="domain">
    <text evidence="12">Only isoform a (Tra-1L), is thought to bind DNA. Zinc fingers 3, 4 and 5 are the most important for DNA binding; removal of finger 5 almost abolishes DNA binding and prevents the selection of binding sites.</text>
</comment>
<comment type="similarity">
    <text evidence="14">Belongs to the GLI C2H2-type zinc-finger protein family.</text>
</comment>
<comment type="sequence caution" evidence="14">
    <conflict type="erroneous initiation">
        <sequence resource="EMBL-CDS" id="CAB61040"/>
    </conflict>
</comment>
<comment type="sequence caution" evidence="14">
    <conflict type="erroneous initiation">
        <sequence resource="EMBL-CDS" id="CAC42377"/>
    </conflict>
</comment>
<dbReference type="EMBL" id="M93256">
    <property type="protein sequence ID" value="AAB59181.1"/>
    <property type="molecule type" value="mRNA"/>
</dbReference>
<dbReference type="EMBL" id="M94130">
    <property type="protein sequence ID" value="AAA91281.1"/>
    <property type="molecule type" value="mRNA"/>
</dbReference>
<dbReference type="EMBL" id="BX284603">
    <property type="protein sequence ID" value="CAB61040.2"/>
    <property type="status" value="ALT_INIT"/>
    <property type="molecule type" value="Genomic_DNA"/>
</dbReference>
<dbReference type="EMBL" id="BX284603">
    <property type="protein sequence ID" value="CAC42377.1"/>
    <property type="status" value="ALT_INIT"/>
    <property type="molecule type" value="Genomic_DNA"/>
</dbReference>
<dbReference type="PIR" id="A43253">
    <property type="entry name" value="A43253"/>
</dbReference>
<dbReference type="PIR" id="B43253">
    <property type="entry name" value="B43253"/>
</dbReference>
<dbReference type="RefSeq" id="NP_001022880.2">
    <molecule id="P34708-1"/>
    <property type="nucleotide sequence ID" value="NM_001027709.4"/>
</dbReference>
<dbReference type="RefSeq" id="NP_001022881.2">
    <molecule id="P34708-2"/>
    <property type="nucleotide sequence ID" value="NM_001027710.6"/>
</dbReference>
<dbReference type="SMR" id="P34708"/>
<dbReference type="BioGRID" id="41731">
    <property type="interactions" value="41"/>
</dbReference>
<dbReference type="FunCoup" id="P34708">
    <property type="interactions" value="1609"/>
</dbReference>
<dbReference type="IntAct" id="P34708">
    <property type="interactions" value="37"/>
</dbReference>
<dbReference type="MINT" id="P34708"/>
<dbReference type="STRING" id="6239.Y47D3A.6a.1"/>
<dbReference type="PaxDb" id="6239-Y47D3A.6a"/>
<dbReference type="PeptideAtlas" id="P34708"/>
<dbReference type="EnsemblMetazoa" id="Y47D3A.6a.1">
    <molecule id="P34708-1"/>
    <property type="protein sequence ID" value="Y47D3A.6a.1"/>
    <property type="gene ID" value="WBGene00006604"/>
</dbReference>
<dbReference type="EnsemblMetazoa" id="Y47D3A.6b.1">
    <molecule id="P34708-2"/>
    <property type="protein sequence ID" value="Y47D3A.6b.1"/>
    <property type="gene ID" value="WBGene00006604"/>
</dbReference>
<dbReference type="GeneID" id="176548"/>
<dbReference type="KEGG" id="cel:CELE_Y47D3A.6"/>
<dbReference type="UCSC" id="Y47D3A.6a">
    <molecule id="P34708-1"/>
    <property type="organism name" value="c. elegans"/>
</dbReference>
<dbReference type="AGR" id="WB:WBGene00006604"/>
<dbReference type="CTD" id="176548"/>
<dbReference type="WormBase" id="Y47D3A.6a">
    <molecule id="P34708-1"/>
    <property type="protein sequence ID" value="CE52672"/>
    <property type="gene ID" value="WBGene00006604"/>
    <property type="gene designation" value="tra-1"/>
</dbReference>
<dbReference type="WormBase" id="Y47D3A.6b">
    <molecule id="P34708-2"/>
    <property type="protein sequence ID" value="CE52664"/>
    <property type="gene ID" value="WBGene00006604"/>
    <property type="gene designation" value="tra-1"/>
</dbReference>
<dbReference type="eggNOG" id="KOG1721">
    <property type="taxonomic scope" value="Eukaryota"/>
</dbReference>
<dbReference type="GeneTree" id="ENSGT00940000169506"/>
<dbReference type="HOGENOM" id="CLU_274778_0_0_1"/>
<dbReference type="InParanoid" id="P34708"/>
<dbReference type="OrthoDB" id="3214149at2759"/>
<dbReference type="SignaLink" id="P34708"/>
<dbReference type="PRO" id="PR:P34708"/>
<dbReference type="Proteomes" id="UP000001940">
    <property type="component" value="Chromosome III"/>
</dbReference>
<dbReference type="Bgee" id="WBGene00006604">
    <property type="expression patterns" value="Expressed in germ line (C elegans) and 4 other cell types or tissues"/>
</dbReference>
<dbReference type="GO" id="GO:0005737">
    <property type="term" value="C:cytoplasm"/>
    <property type="evidence" value="ECO:0000314"/>
    <property type="project" value="UniProtKB"/>
</dbReference>
<dbReference type="GO" id="GO:0005634">
    <property type="term" value="C:nucleus"/>
    <property type="evidence" value="ECO:0000314"/>
    <property type="project" value="UniProtKB"/>
</dbReference>
<dbReference type="GO" id="GO:0000981">
    <property type="term" value="F:DNA-binding transcription factor activity, RNA polymerase II-specific"/>
    <property type="evidence" value="ECO:0000318"/>
    <property type="project" value="GO_Central"/>
</dbReference>
<dbReference type="GO" id="GO:0000978">
    <property type="term" value="F:RNA polymerase II cis-regulatory region sequence-specific DNA binding"/>
    <property type="evidence" value="ECO:0000314"/>
    <property type="project" value="WormBase"/>
</dbReference>
<dbReference type="GO" id="GO:0001162">
    <property type="term" value="F:RNA polymerase II intronic transcription regulatory region sequence-specific DNA binding"/>
    <property type="evidence" value="ECO:0000314"/>
    <property type="project" value="WormBase"/>
</dbReference>
<dbReference type="GO" id="GO:0000977">
    <property type="term" value="F:RNA polymerase II transcription regulatory region sequence-specific DNA binding"/>
    <property type="evidence" value="ECO:0000314"/>
    <property type="project" value="WormBase"/>
</dbReference>
<dbReference type="GO" id="GO:0043565">
    <property type="term" value="F:sequence-specific DNA binding"/>
    <property type="evidence" value="ECO:0000314"/>
    <property type="project" value="WormBase"/>
</dbReference>
<dbReference type="GO" id="GO:0008270">
    <property type="term" value="F:zinc ion binding"/>
    <property type="evidence" value="ECO:0007669"/>
    <property type="project" value="UniProtKB-KW"/>
</dbReference>
<dbReference type="GO" id="GO:0030154">
    <property type="term" value="P:cell differentiation"/>
    <property type="evidence" value="ECO:0007669"/>
    <property type="project" value="UniProtKB-KW"/>
</dbReference>
<dbReference type="GO" id="GO:0007417">
    <property type="term" value="P:central nervous system development"/>
    <property type="evidence" value="ECO:0000318"/>
    <property type="project" value="GO_Central"/>
</dbReference>
<dbReference type="GO" id="GO:0019099">
    <property type="term" value="P:female germ-line sex determination"/>
    <property type="evidence" value="ECO:0000304"/>
    <property type="project" value="UniProtKB"/>
</dbReference>
<dbReference type="GO" id="GO:0019101">
    <property type="term" value="P:female somatic sex determination"/>
    <property type="evidence" value="ECO:0000315"/>
    <property type="project" value="WormBase"/>
</dbReference>
<dbReference type="GO" id="GO:0008406">
    <property type="term" value="P:gonad development"/>
    <property type="evidence" value="ECO:0000316"/>
    <property type="project" value="UniProtKB"/>
</dbReference>
<dbReference type="GO" id="GO:0000122">
    <property type="term" value="P:negative regulation of transcription by RNA polymerase II"/>
    <property type="evidence" value="ECO:0000315"/>
    <property type="project" value="WormBase"/>
</dbReference>
<dbReference type="GO" id="GO:0043525">
    <property type="term" value="P:positive regulation of neuron apoptotic process"/>
    <property type="evidence" value="ECO:0000315"/>
    <property type="project" value="WormBase"/>
</dbReference>
<dbReference type="GO" id="GO:0045944">
    <property type="term" value="P:positive regulation of transcription by RNA polymerase II"/>
    <property type="evidence" value="ECO:0000318"/>
    <property type="project" value="GO_Central"/>
</dbReference>
<dbReference type="GO" id="GO:0010468">
    <property type="term" value="P:regulation of gene expression"/>
    <property type="evidence" value="ECO:0000315"/>
    <property type="project" value="UniProtKB"/>
</dbReference>
<dbReference type="GO" id="GO:0007283">
    <property type="term" value="P:spermatogenesis"/>
    <property type="evidence" value="ECO:0000315"/>
    <property type="project" value="UniProtKB"/>
</dbReference>
<dbReference type="FunFam" id="3.30.160.60:FF:000019">
    <property type="entry name" value="GLI family zinc finger 3"/>
    <property type="match status" value="1"/>
</dbReference>
<dbReference type="FunFam" id="3.30.160.60:FF:000036">
    <property type="entry name" value="GLI family zinc finger 3"/>
    <property type="match status" value="1"/>
</dbReference>
<dbReference type="FunFam" id="3.30.160.60:FF:000532">
    <property type="entry name" value="GLIS family zinc finger 2"/>
    <property type="match status" value="1"/>
</dbReference>
<dbReference type="FunFam" id="3.30.160.60:FF:000104">
    <property type="entry name" value="Transcriptional repressor protein YY1"/>
    <property type="match status" value="1"/>
</dbReference>
<dbReference type="Gene3D" id="3.30.160.60">
    <property type="entry name" value="Classic Zinc Finger"/>
    <property type="match status" value="5"/>
</dbReference>
<dbReference type="InterPro" id="IPR043359">
    <property type="entry name" value="GLI-like"/>
</dbReference>
<dbReference type="InterPro" id="IPR048420">
    <property type="entry name" value="Zap1-like_Znf1"/>
</dbReference>
<dbReference type="InterPro" id="IPR056436">
    <property type="entry name" value="Znf-C2H2_ZIC1-5/GLI1-3-like"/>
</dbReference>
<dbReference type="InterPro" id="IPR036236">
    <property type="entry name" value="Znf_C2H2_sf"/>
</dbReference>
<dbReference type="InterPro" id="IPR013087">
    <property type="entry name" value="Znf_C2H2_type"/>
</dbReference>
<dbReference type="PANTHER" id="PTHR45718:SF8">
    <property type="entry name" value="GLIS FAMILY ZINC FINGER 2"/>
    <property type="match status" value="1"/>
</dbReference>
<dbReference type="PANTHER" id="PTHR45718">
    <property type="entry name" value="TRANSCRIPTIONAL ACTIVATOR CUBITUS INTERRUPTUS"/>
    <property type="match status" value="1"/>
</dbReference>
<dbReference type="Pfam" id="PF21816">
    <property type="entry name" value="Zap1_zf1"/>
    <property type="match status" value="1"/>
</dbReference>
<dbReference type="Pfam" id="PF00096">
    <property type="entry name" value="zf-C2H2"/>
    <property type="match status" value="3"/>
</dbReference>
<dbReference type="Pfam" id="PF23561">
    <property type="entry name" value="zf-C2H2_15"/>
    <property type="match status" value="1"/>
</dbReference>
<dbReference type="SMART" id="SM00355">
    <property type="entry name" value="ZnF_C2H2"/>
    <property type="match status" value="5"/>
</dbReference>
<dbReference type="SUPFAM" id="SSF57667">
    <property type="entry name" value="beta-beta-alpha zinc fingers"/>
    <property type="match status" value="3"/>
</dbReference>
<dbReference type="PROSITE" id="PS00028">
    <property type="entry name" value="ZINC_FINGER_C2H2_1"/>
    <property type="match status" value="4"/>
</dbReference>
<dbReference type="PROSITE" id="PS50157">
    <property type="entry name" value="ZINC_FINGER_C2H2_2"/>
    <property type="match status" value="4"/>
</dbReference>
<protein>
    <recommendedName>
        <fullName evidence="15">Sex-determining transformer protein 1</fullName>
    </recommendedName>
    <alternativeName>
        <fullName evidence="15">Hermaphrodization of XO animals protein 2</fullName>
    </alternativeName>
</protein>
<gene>
    <name evidence="15" type="primary">tra-1</name>
    <name evidence="15" type="synonym">her-2</name>
    <name evidence="15" type="ORF">Y47D3A.6</name>
</gene>
<keyword id="KW-0025">Alternative splicing</keyword>
<keyword id="KW-0963">Cytoplasm</keyword>
<keyword id="KW-0217">Developmental protein</keyword>
<keyword id="KW-0221">Differentiation</keyword>
<keyword id="KW-0238">DNA-binding</keyword>
<keyword id="KW-0479">Metal-binding</keyword>
<keyword id="KW-0539">Nucleus</keyword>
<keyword id="KW-1185">Reference proteome</keyword>
<keyword id="KW-0677">Repeat</keyword>
<keyword id="KW-0726">Sexual differentiation</keyword>
<keyword id="KW-0744">Spermatogenesis</keyword>
<keyword id="KW-0862">Zinc</keyword>
<keyword id="KW-0863">Zinc-finger</keyword>
<accession>P34708</accession>
<accession>Q95Q22</accession>
<accession>Q9U2C0</accession>
<feature type="chain" id="PRO_0000046895" description="Sex-determining transformer protein 1">
    <location>
        <begin position="1"/>
        <end position="1110"/>
    </location>
</feature>
<feature type="zinc finger region" description="C2H2-type 1; low DNA-binding affinity" evidence="2">
    <location>
        <begin position="208"/>
        <end position="233"/>
    </location>
</feature>
<feature type="zinc finger region" description="C2H2-type 2; low DNA-binding affinity" evidence="2">
    <location>
        <begin position="244"/>
        <end position="270"/>
    </location>
</feature>
<feature type="zinc finger region" description="C2H2-type 3" evidence="2">
    <location>
        <begin position="276"/>
        <end position="300"/>
    </location>
</feature>
<feature type="zinc finger region" description="C2H2-type 4" evidence="2">
    <location>
        <begin position="306"/>
        <end position="331"/>
    </location>
</feature>
<feature type="zinc finger region" description="C2H2-type 5" evidence="2">
    <location>
        <begin position="337"/>
        <end position="362"/>
    </location>
</feature>
<feature type="region of interest" description="Disordered" evidence="3">
    <location>
        <begin position="1"/>
        <end position="103"/>
    </location>
</feature>
<feature type="region of interest" description="Disordered" evidence="3">
    <location>
        <begin position="170"/>
        <end position="202"/>
    </location>
</feature>
<feature type="region of interest" description="Disordered" evidence="3">
    <location>
        <begin position="363"/>
        <end position="397"/>
    </location>
</feature>
<feature type="region of interest" description="Disordered" evidence="3">
    <location>
        <begin position="594"/>
        <end position="682"/>
    </location>
</feature>
<feature type="region of interest" description="Disordered" evidence="3">
    <location>
        <begin position="875"/>
        <end position="895"/>
    </location>
</feature>
<feature type="region of interest" description="Disordered" evidence="3">
    <location>
        <begin position="1057"/>
        <end position="1110"/>
    </location>
</feature>
<feature type="compositionally biased region" description="Basic and acidic residues" evidence="3">
    <location>
        <begin position="44"/>
        <end position="61"/>
    </location>
</feature>
<feature type="compositionally biased region" description="Polar residues" evidence="3">
    <location>
        <begin position="65"/>
        <end position="90"/>
    </location>
</feature>
<feature type="compositionally biased region" description="Low complexity" evidence="3">
    <location>
        <begin position="188"/>
        <end position="201"/>
    </location>
</feature>
<feature type="compositionally biased region" description="Low complexity" evidence="3">
    <location>
        <begin position="597"/>
        <end position="606"/>
    </location>
</feature>
<feature type="compositionally biased region" description="Gly residues" evidence="3">
    <location>
        <begin position="641"/>
        <end position="652"/>
    </location>
</feature>
<feature type="compositionally biased region" description="Polar residues" evidence="3">
    <location>
        <begin position="669"/>
        <end position="678"/>
    </location>
</feature>
<feature type="compositionally biased region" description="Basic and acidic residues" evidence="3">
    <location>
        <begin position="886"/>
        <end position="895"/>
    </location>
</feature>
<feature type="compositionally biased region" description="Polar residues" evidence="3">
    <location>
        <begin position="1057"/>
        <end position="1066"/>
    </location>
</feature>
<feature type="compositionally biased region" description="Pro residues" evidence="3">
    <location>
        <begin position="1076"/>
        <end position="1086"/>
    </location>
</feature>
<feature type="compositionally biased region" description="Basic and acidic residues" evidence="3">
    <location>
        <begin position="1092"/>
        <end position="1103"/>
    </location>
</feature>
<feature type="splice variant" id="VSP_006821" description="In isoform b." evidence="14">
    <original>YPGCGKEYS</original>
    <variation>VGFGGDNEI</variation>
    <location>
        <begin position="280"/>
        <end position="288"/>
    </location>
</feature>
<feature type="splice variant" id="VSP_006822" description="In isoform b." evidence="14">
    <location>
        <begin position="289"/>
        <end position="1110"/>
    </location>
</feature>
<sequence length="1110" mass="122804">MMAPSTEDPDTVVEAQRRGSFSKKKNANGWNKVELVDQCAKQMGSEDKQPGGGDVKTENDPSKNGLGSATSNFIQSSVPPSHQTLSNPLQLSPPAEASVAQQSGASQVFPTFQAALGASSDELLQPNATSSSTSSSASTSSIVPVVKFTNQTAPNGSTVATSVGQNVRLTINGKRVGRPPGTFKRPQNNAANSSNSGNDSDMMGDHDLTCRWKSCNSSFQTLKALVDHVQESHVQSTEQEHHAWRCEWEGCDRNETFKALYMLIVHVRRHTGEKPNKCEYPGCGKEYSRLENLKTHRRTHTGEKPYKCEFADCEKAFSNASDRAKHQNRTHSNLKPYSCQIPQCTKSYTDPSSLRKHIKAVHGDDEYEKAKKSRPANYSNRRRPDHRLAPPTGAMSHPYLATPNSGASVVAHSSVHQQNFINMALAQHHHNAQRAQQLMAATGNVMPMMDPASAAAAAQAQAHHQAQAQMLQTHMMQQAQIQAAAQMQAQVQHQAAMQAHAMQQAQMVLQNNLLGAQSLLSPFSPLLPPSRAPNVMAMLQTPPTPTSVAPMFDIMTSRAPMAPVVSAPTAPAPLVPAPVPASPVFDELREQMREVEPLQQQQQQEPMDQDLQDIRVDGDSDDEDEEEPRTPSGALLLPRGGNNGDGGFGGSGSSRASSGSGTMELSAAPISQNGSRASGSGERGMRSFLIADILQLAADFQNERLLSDVLDLAIFDTRDVRSLHNIYQVYIRAHKAIPITRRPLDWNETHQLHNLYHDPRFNRAEHQDSPAIRDRDTRFWRTIAEANTMRQRQIEPVPLDDDDEGYFDEMVHRVQNGRLNEQFMEGFESDDDDGFEDEDDVPGLGIAVYRGRRRVRREALKQANLDIQEAETAGRNVGGFGDEEDRNNRGHDQDRSFLDHYYPPMVVVVETESPQIVRDQEMMRQFEEAKKNVETDEIKKRAEAMQFGTSSSHHHTKTLLIQRALFDKTSSVRRSLLQFITISVDQEELRQSCHATSAPQGAHVVHNVVDEFDSIMRAQEDSNNRILLSLDIPAPSAVTGVSGSITHADNSALQLQQEQPTSSFSSWFPEDDPIYALPPPPPPPAPPRRRRSADNKDDSENIPKKPRHQF</sequence>
<proteinExistence type="evidence at protein level"/>
<evidence type="ECO:0000250" key="1">
    <source>
        <dbReference type="UniProtKB" id="Q17308"/>
    </source>
</evidence>
<evidence type="ECO:0000255" key="2">
    <source>
        <dbReference type="PROSITE-ProRule" id="PRU00042"/>
    </source>
</evidence>
<evidence type="ECO:0000256" key="3">
    <source>
        <dbReference type="SAM" id="MobiDB-lite"/>
    </source>
</evidence>
<evidence type="ECO:0000269" key="4">
    <source>
    </source>
</evidence>
<evidence type="ECO:0000269" key="5">
    <source>
    </source>
</evidence>
<evidence type="ECO:0000269" key="6">
    <source>
    </source>
</evidence>
<evidence type="ECO:0000269" key="7">
    <source>
    </source>
</evidence>
<evidence type="ECO:0000269" key="8">
    <source>
    </source>
</evidence>
<evidence type="ECO:0000269" key="9">
    <source>
    </source>
</evidence>
<evidence type="ECO:0000269" key="10">
    <source>
    </source>
</evidence>
<evidence type="ECO:0000269" key="11">
    <source>
    </source>
</evidence>
<evidence type="ECO:0000269" key="12">
    <source>
    </source>
</evidence>
<evidence type="ECO:0000303" key="13">
    <source>
    </source>
</evidence>
<evidence type="ECO:0000305" key="14"/>
<evidence type="ECO:0000312" key="15">
    <source>
        <dbReference type="WormBase" id="Y47D3A.6a"/>
    </source>
</evidence>
<evidence type="ECO:0000312" key="16">
    <source>
        <dbReference type="WormBase" id="Y47D3A.6b"/>
    </source>
</evidence>